<feature type="chain" id="PRO_1000022694" description="Trigger factor">
    <location>
        <begin position="1"/>
        <end position="436"/>
    </location>
</feature>
<feature type="domain" description="PPIase FKBP-type" evidence="1">
    <location>
        <begin position="163"/>
        <end position="248"/>
    </location>
</feature>
<accession>Q03QN6</accession>
<protein>
    <recommendedName>
        <fullName evidence="1">Trigger factor</fullName>
        <shortName evidence="1">TF</shortName>
        <ecNumber evidence="1">5.2.1.8</ecNumber>
    </recommendedName>
    <alternativeName>
        <fullName evidence="1">PPIase</fullName>
    </alternativeName>
</protein>
<gene>
    <name evidence="1" type="primary">tig</name>
    <name type="ordered locus">LVIS_1388</name>
</gene>
<proteinExistence type="inferred from homology"/>
<dbReference type="EC" id="5.2.1.8" evidence="1"/>
<dbReference type="EMBL" id="CP000416">
    <property type="protein sequence ID" value="ABJ64486.1"/>
    <property type="molecule type" value="Genomic_DNA"/>
</dbReference>
<dbReference type="RefSeq" id="WP_011668059.1">
    <property type="nucleotide sequence ID" value="NC_008497.1"/>
</dbReference>
<dbReference type="SMR" id="Q03QN6"/>
<dbReference type="STRING" id="387344.LVIS_1388"/>
<dbReference type="KEGG" id="lbr:LVIS_1388"/>
<dbReference type="PATRIC" id="fig|387344.15.peg.1324"/>
<dbReference type="eggNOG" id="COG0544">
    <property type="taxonomic scope" value="Bacteria"/>
</dbReference>
<dbReference type="HOGENOM" id="CLU_033058_3_2_9"/>
<dbReference type="Proteomes" id="UP000001652">
    <property type="component" value="Chromosome"/>
</dbReference>
<dbReference type="GO" id="GO:0005737">
    <property type="term" value="C:cytoplasm"/>
    <property type="evidence" value="ECO:0007669"/>
    <property type="project" value="UniProtKB-SubCell"/>
</dbReference>
<dbReference type="GO" id="GO:0003755">
    <property type="term" value="F:peptidyl-prolyl cis-trans isomerase activity"/>
    <property type="evidence" value="ECO:0007669"/>
    <property type="project" value="UniProtKB-UniRule"/>
</dbReference>
<dbReference type="GO" id="GO:0044183">
    <property type="term" value="F:protein folding chaperone"/>
    <property type="evidence" value="ECO:0007669"/>
    <property type="project" value="TreeGrafter"/>
</dbReference>
<dbReference type="GO" id="GO:0043022">
    <property type="term" value="F:ribosome binding"/>
    <property type="evidence" value="ECO:0007669"/>
    <property type="project" value="TreeGrafter"/>
</dbReference>
<dbReference type="GO" id="GO:0051083">
    <property type="term" value="P:'de novo' cotranslational protein folding"/>
    <property type="evidence" value="ECO:0007669"/>
    <property type="project" value="TreeGrafter"/>
</dbReference>
<dbReference type="GO" id="GO:0051301">
    <property type="term" value="P:cell division"/>
    <property type="evidence" value="ECO:0007669"/>
    <property type="project" value="UniProtKB-KW"/>
</dbReference>
<dbReference type="GO" id="GO:0061077">
    <property type="term" value="P:chaperone-mediated protein folding"/>
    <property type="evidence" value="ECO:0007669"/>
    <property type="project" value="TreeGrafter"/>
</dbReference>
<dbReference type="GO" id="GO:0015031">
    <property type="term" value="P:protein transport"/>
    <property type="evidence" value="ECO:0007669"/>
    <property type="project" value="UniProtKB-UniRule"/>
</dbReference>
<dbReference type="GO" id="GO:0043335">
    <property type="term" value="P:protein unfolding"/>
    <property type="evidence" value="ECO:0007669"/>
    <property type="project" value="TreeGrafter"/>
</dbReference>
<dbReference type="FunFam" id="3.10.50.40:FF:000001">
    <property type="entry name" value="Trigger factor"/>
    <property type="match status" value="1"/>
</dbReference>
<dbReference type="Gene3D" id="3.10.50.40">
    <property type="match status" value="1"/>
</dbReference>
<dbReference type="Gene3D" id="3.30.70.1050">
    <property type="entry name" value="Trigger factor ribosome-binding domain"/>
    <property type="match status" value="1"/>
</dbReference>
<dbReference type="Gene3D" id="1.10.3120.10">
    <property type="entry name" value="Trigger factor, C-terminal domain"/>
    <property type="match status" value="1"/>
</dbReference>
<dbReference type="HAMAP" id="MF_00303">
    <property type="entry name" value="Trigger_factor_Tig"/>
    <property type="match status" value="1"/>
</dbReference>
<dbReference type="InterPro" id="IPR046357">
    <property type="entry name" value="PPIase_dom_sf"/>
</dbReference>
<dbReference type="InterPro" id="IPR001179">
    <property type="entry name" value="PPIase_FKBP_dom"/>
</dbReference>
<dbReference type="InterPro" id="IPR005215">
    <property type="entry name" value="Trig_fac"/>
</dbReference>
<dbReference type="InterPro" id="IPR008880">
    <property type="entry name" value="Trigger_fac_C"/>
</dbReference>
<dbReference type="InterPro" id="IPR037041">
    <property type="entry name" value="Trigger_fac_C_sf"/>
</dbReference>
<dbReference type="InterPro" id="IPR008881">
    <property type="entry name" value="Trigger_fac_ribosome-bd_bac"/>
</dbReference>
<dbReference type="InterPro" id="IPR036611">
    <property type="entry name" value="Trigger_fac_ribosome-bd_sf"/>
</dbReference>
<dbReference type="InterPro" id="IPR027304">
    <property type="entry name" value="Trigger_fact/SurA_dom_sf"/>
</dbReference>
<dbReference type="NCBIfam" id="TIGR00115">
    <property type="entry name" value="tig"/>
    <property type="match status" value="1"/>
</dbReference>
<dbReference type="PANTHER" id="PTHR30560">
    <property type="entry name" value="TRIGGER FACTOR CHAPERONE AND PEPTIDYL-PROLYL CIS/TRANS ISOMERASE"/>
    <property type="match status" value="1"/>
</dbReference>
<dbReference type="PANTHER" id="PTHR30560:SF3">
    <property type="entry name" value="TRIGGER FACTOR-LIKE PROTEIN TIG, CHLOROPLASTIC"/>
    <property type="match status" value="1"/>
</dbReference>
<dbReference type="Pfam" id="PF00254">
    <property type="entry name" value="FKBP_C"/>
    <property type="match status" value="1"/>
</dbReference>
<dbReference type="Pfam" id="PF05698">
    <property type="entry name" value="Trigger_C"/>
    <property type="match status" value="1"/>
</dbReference>
<dbReference type="Pfam" id="PF05697">
    <property type="entry name" value="Trigger_N"/>
    <property type="match status" value="1"/>
</dbReference>
<dbReference type="PIRSF" id="PIRSF003095">
    <property type="entry name" value="Trigger_factor"/>
    <property type="match status" value="1"/>
</dbReference>
<dbReference type="SUPFAM" id="SSF54534">
    <property type="entry name" value="FKBP-like"/>
    <property type="match status" value="1"/>
</dbReference>
<dbReference type="SUPFAM" id="SSF109998">
    <property type="entry name" value="Triger factor/SurA peptide-binding domain-like"/>
    <property type="match status" value="1"/>
</dbReference>
<dbReference type="SUPFAM" id="SSF102735">
    <property type="entry name" value="Trigger factor ribosome-binding domain"/>
    <property type="match status" value="1"/>
</dbReference>
<dbReference type="PROSITE" id="PS50059">
    <property type="entry name" value="FKBP_PPIASE"/>
    <property type="match status" value="1"/>
</dbReference>
<organism>
    <name type="scientific">Levilactobacillus brevis (strain ATCC 367 / BCRC 12310 / CIP 105137 / JCM 1170 / LMG 11437 / NCIMB 947 / NCTC 947)</name>
    <name type="common">Lactobacillus brevis</name>
    <dbReference type="NCBI Taxonomy" id="387344"/>
    <lineage>
        <taxon>Bacteria</taxon>
        <taxon>Bacillati</taxon>
        <taxon>Bacillota</taxon>
        <taxon>Bacilli</taxon>
        <taxon>Lactobacillales</taxon>
        <taxon>Lactobacillaceae</taxon>
        <taxon>Levilactobacillus</taxon>
    </lineage>
</organism>
<keyword id="KW-0131">Cell cycle</keyword>
<keyword id="KW-0132">Cell division</keyword>
<keyword id="KW-0143">Chaperone</keyword>
<keyword id="KW-0963">Cytoplasm</keyword>
<keyword id="KW-0413">Isomerase</keyword>
<keyword id="KW-1185">Reference proteome</keyword>
<keyword id="KW-0697">Rotamase</keyword>
<comment type="function">
    <text evidence="1">Involved in protein export. Acts as a chaperone by maintaining the newly synthesized protein in an open conformation. Functions as a peptidyl-prolyl cis-trans isomerase.</text>
</comment>
<comment type="catalytic activity">
    <reaction evidence="1">
        <text>[protein]-peptidylproline (omega=180) = [protein]-peptidylproline (omega=0)</text>
        <dbReference type="Rhea" id="RHEA:16237"/>
        <dbReference type="Rhea" id="RHEA-COMP:10747"/>
        <dbReference type="Rhea" id="RHEA-COMP:10748"/>
        <dbReference type="ChEBI" id="CHEBI:83833"/>
        <dbReference type="ChEBI" id="CHEBI:83834"/>
        <dbReference type="EC" id="5.2.1.8"/>
    </reaction>
</comment>
<comment type="subcellular location">
    <subcellularLocation>
        <location>Cytoplasm</location>
    </subcellularLocation>
    <text evidence="1">About half TF is bound to the ribosome near the polypeptide exit tunnel while the other half is free in the cytoplasm.</text>
</comment>
<comment type="domain">
    <text evidence="1">Consists of 3 domains; the N-terminus binds the ribosome, the middle domain has PPIase activity, while the C-terminus has intrinsic chaperone activity on its own.</text>
</comment>
<comment type="similarity">
    <text evidence="1">Belongs to the FKBP-type PPIase family. Tig subfamily.</text>
</comment>
<reference key="1">
    <citation type="journal article" date="2006" name="Proc. Natl. Acad. Sci. U.S.A.">
        <title>Comparative genomics of the lactic acid bacteria.</title>
        <authorList>
            <person name="Makarova K.S."/>
            <person name="Slesarev A."/>
            <person name="Wolf Y.I."/>
            <person name="Sorokin A."/>
            <person name="Mirkin B."/>
            <person name="Koonin E.V."/>
            <person name="Pavlov A."/>
            <person name="Pavlova N."/>
            <person name="Karamychev V."/>
            <person name="Polouchine N."/>
            <person name="Shakhova V."/>
            <person name="Grigoriev I."/>
            <person name="Lou Y."/>
            <person name="Rohksar D."/>
            <person name="Lucas S."/>
            <person name="Huang K."/>
            <person name="Goodstein D.M."/>
            <person name="Hawkins T."/>
            <person name="Plengvidhya V."/>
            <person name="Welker D."/>
            <person name="Hughes J."/>
            <person name="Goh Y."/>
            <person name="Benson A."/>
            <person name="Baldwin K."/>
            <person name="Lee J.-H."/>
            <person name="Diaz-Muniz I."/>
            <person name="Dosti B."/>
            <person name="Smeianov V."/>
            <person name="Wechter W."/>
            <person name="Barabote R."/>
            <person name="Lorca G."/>
            <person name="Altermann E."/>
            <person name="Barrangou R."/>
            <person name="Ganesan B."/>
            <person name="Xie Y."/>
            <person name="Rawsthorne H."/>
            <person name="Tamir D."/>
            <person name="Parker C."/>
            <person name="Breidt F."/>
            <person name="Broadbent J.R."/>
            <person name="Hutkins R."/>
            <person name="O'Sullivan D."/>
            <person name="Steele J."/>
            <person name="Unlu G."/>
            <person name="Saier M.H. Jr."/>
            <person name="Klaenhammer T."/>
            <person name="Richardson P."/>
            <person name="Kozyavkin S."/>
            <person name="Weimer B.C."/>
            <person name="Mills D.A."/>
        </authorList>
    </citation>
    <scope>NUCLEOTIDE SEQUENCE [LARGE SCALE GENOMIC DNA]</scope>
    <source>
        <strain>ATCC 367 / BCRC 12310 / CIP 105137 / JCM 1170 / LMG 11437 / NCIMB 947 / NCTC 947</strain>
    </source>
</reference>
<name>TIG_LEVBA</name>
<evidence type="ECO:0000255" key="1">
    <source>
        <dbReference type="HAMAP-Rule" id="MF_00303"/>
    </source>
</evidence>
<sequence length="436" mass="48813">MAAKWEKKDNNQGELTFEIAPDKIKEGLDKAFQRTKKNLAVPGFRKGRVPRQIFNQMYGEEALYQDALNIVLPEAYDAAIKEAGIEPVDQPQVDVESMDKDQPWVLKAVVTVKPDVKLGEYKGLSVTKQNTRVYQKDIDAEIEKQRQQQAELVLKEDEAAAKGDTVVIDFDGYVDGKQFDGGKADNYSLELGSNSFIPGFEDQLVGHKAGEDVDVKVTFPADYQAEDLRDKEATFKVTIHEVKEKQLPELDDEFAKDVDEDVDSLEELEAKTKDRLKEQKVTAAHDAIEDEAISEAVDNAEIAAVPEAMLKDDIDRQMDQYLANMQQQGIEPKMYFQLTGTTEDDLRKQFADGAEKRIKTNLVLEAVVEAEKIEPSEDEVAAEVKDLASQYGMEESAVRSALSDDMLKHDIAIKSAVDLIADSAKQDKKKDAEDDE</sequence>